<proteinExistence type="inferred from homology"/>
<dbReference type="EC" id="6.1.1.4" evidence="1"/>
<dbReference type="EMBL" id="CP000350">
    <property type="protein sequence ID" value="ABJ76972.1"/>
    <property type="molecule type" value="Genomic_DNA"/>
</dbReference>
<dbReference type="RefSeq" id="WP_011669510.1">
    <property type="nucleotide sequence ID" value="NC_008510.1"/>
</dbReference>
<dbReference type="SMR" id="Q04Q48"/>
<dbReference type="KEGG" id="lbj:LBJ_2541"/>
<dbReference type="HOGENOM" id="CLU_004427_0_0_12"/>
<dbReference type="Proteomes" id="UP000000656">
    <property type="component" value="Chromosome 1"/>
</dbReference>
<dbReference type="GO" id="GO:0005829">
    <property type="term" value="C:cytosol"/>
    <property type="evidence" value="ECO:0007669"/>
    <property type="project" value="TreeGrafter"/>
</dbReference>
<dbReference type="GO" id="GO:0002161">
    <property type="term" value="F:aminoacyl-tRNA deacylase activity"/>
    <property type="evidence" value="ECO:0007669"/>
    <property type="project" value="InterPro"/>
</dbReference>
<dbReference type="GO" id="GO:0005524">
    <property type="term" value="F:ATP binding"/>
    <property type="evidence" value="ECO:0007669"/>
    <property type="project" value="UniProtKB-UniRule"/>
</dbReference>
<dbReference type="GO" id="GO:0004823">
    <property type="term" value="F:leucine-tRNA ligase activity"/>
    <property type="evidence" value="ECO:0007669"/>
    <property type="project" value="UniProtKB-UniRule"/>
</dbReference>
<dbReference type="GO" id="GO:0006429">
    <property type="term" value="P:leucyl-tRNA aminoacylation"/>
    <property type="evidence" value="ECO:0007669"/>
    <property type="project" value="UniProtKB-UniRule"/>
</dbReference>
<dbReference type="CDD" id="cd07958">
    <property type="entry name" value="Anticodon_Ia_Leu_BEm"/>
    <property type="match status" value="1"/>
</dbReference>
<dbReference type="CDD" id="cd00812">
    <property type="entry name" value="LeuRS_core"/>
    <property type="match status" value="1"/>
</dbReference>
<dbReference type="FunFam" id="1.10.730.10:FF:000012">
    <property type="entry name" value="Leucine--tRNA ligase"/>
    <property type="match status" value="1"/>
</dbReference>
<dbReference type="FunFam" id="3.40.50.620:FF:000056">
    <property type="entry name" value="Leucine--tRNA ligase"/>
    <property type="match status" value="1"/>
</dbReference>
<dbReference type="FunFam" id="3.40.50.620:FF:000060">
    <property type="entry name" value="Leucine--tRNA ligase"/>
    <property type="match status" value="1"/>
</dbReference>
<dbReference type="FunFam" id="1.10.730.10:FF:000011">
    <property type="entry name" value="Leucine--tRNA ligase chloroplastic/mitochondrial"/>
    <property type="match status" value="1"/>
</dbReference>
<dbReference type="Gene3D" id="3.40.50.620">
    <property type="entry name" value="HUPs"/>
    <property type="match status" value="3"/>
</dbReference>
<dbReference type="Gene3D" id="1.10.730.10">
    <property type="entry name" value="Isoleucyl-tRNA Synthetase, Domain 1"/>
    <property type="match status" value="1"/>
</dbReference>
<dbReference type="Gene3D" id="3.90.740.10">
    <property type="entry name" value="Valyl/Leucyl/Isoleucyl-tRNA synthetase, editing domain"/>
    <property type="match status" value="1"/>
</dbReference>
<dbReference type="HAMAP" id="MF_00049_B">
    <property type="entry name" value="Leu_tRNA_synth_B"/>
    <property type="match status" value="1"/>
</dbReference>
<dbReference type="InterPro" id="IPR001412">
    <property type="entry name" value="aa-tRNA-synth_I_CS"/>
</dbReference>
<dbReference type="InterPro" id="IPR002300">
    <property type="entry name" value="aa-tRNA-synth_Ia"/>
</dbReference>
<dbReference type="InterPro" id="IPR002302">
    <property type="entry name" value="Leu-tRNA-ligase"/>
</dbReference>
<dbReference type="InterPro" id="IPR025709">
    <property type="entry name" value="Leu_tRNA-synth_edit"/>
</dbReference>
<dbReference type="InterPro" id="IPR013155">
    <property type="entry name" value="M/V/L/I-tRNA-synth_anticd-bd"/>
</dbReference>
<dbReference type="InterPro" id="IPR014729">
    <property type="entry name" value="Rossmann-like_a/b/a_fold"/>
</dbReference>
<dbReference type="InterPro" id="IPR009080">
    <property type="entry name" value="tRNAsynth_Ia_anticodon-bd"/>
</dbReference>
<dbReference type="InterPro" id="IPR009008">
    <property type="entry name" value="Val/Leu/Ile-tRNA-synth_edit"/>
</dbReference>
<dbReference type="NCBIfam" id="TIGR00396">
    <property type="entry name" value="leuS_bact"/>
    <property type="match status" value="1"/>
</dbReference>
<dbReference type="PANTHER" id="PTHR43740:SF2">
    <property type="entry name" value="LEUCINE--TRNA LIGASE, MITOCHONDRIAL"/>
    <property type="match status" value="1"/>
</dbReference>
<dbReference type="PANTHER" id="PTHR43740">
    <property type="entry name" value="LEUCYL-TRNA SYNTHETASE"/>
    <property type="match status" value="1"/>
</dbReference>
<dbReference type="Pfam" id="PF08264">
    <property type="entry name" value="Anticodon_1"/>
    <property type="match status" value="1"/>
</dbReference>
<dbReference type="Pfam" id="PF00133">
    <property type="entry name" value="tRNA-synt_1"/>
    <property type="match status" value="2"/>
</dbReference>
<dbReference type="Pfam" id="PF13603">
    <property type="entry name" value="tRNA-synt_1_2"/>
    <property type="match status" value="1"/>
</dbReference>
<dbReference type="PRINTS" id="PR00985">
    <property type="entry name" value="TRNASYNTHLEU"/>
</dbReference>
<dbReference type="SUPFAM" id="SSF47323">
    <property type="entry name" value="Anticodon-binding domain of a subclass of class I aminoacyl-tRNA synthetases"/>
    <property type="match status" value="1"/>
</dbReference>
<dbReference type="SUPFAM" id="SSF52374">
    <property type="entry name" value="Nucleotidylyl transferase"/>
    <property type="match status" value="1"/>
</dbReference>
<dbReference type="SUPFAM" id="SSF50677">
    <property type="entry name" value="ValRS/IleRS/LeuRS editing domain"/>
    <property type="match status" value="1"/>
</dbReference>
<dbReference type="PROSITE" id="PS00178">
    <property type="entry name" value="AA_TRNA_LIGASE_I"/>
    <property type="match status" value="1"/>
</dbReference>
<organism>
    <name type="scientific">Leptospira borgpetersenii serovar Hardjo-bovis (strain JB197)</name>
    <dbReference type="NCBI Taxonomy" id="355277"/>
    <lineage>
        <taxon>Bacteria</taxon>
        <taxon>Pseudomonadati</taxon>
        <taxon>Spirochaetota</taxon>
        <taxon>Spirochaetia</taxon>
        <taxon>Leptospirales</taxon>
        <taxon>Leptospiraceae</taxon>
        <taxon>Leptospira</taxon>
    </lineage>
</organism>
<sequence>MQYPFQEVESFWQKFWEENKSFQTNIRSSKPKFYCLDMFPYPSGAGLHVGHPEGYTATDILSRFKRMKGFEVLHPMGWDAFGLPAERYAMQTGIHPAITTKNNIDNFRRQIQMIGLSYDWSRELSTTDPDYYKFTQWIFIQLYQSWFNPELKKAESIETLIQRFSNKGSADLDYKPFSAQEWKQFSLVEKEKILSDFRLVYQAEIPVNWCEALGTVLANEEVEEWIDKGYEVVRKPMRQYMMRITAYADRLLEDLKLVQWPSSTLEMQKNWIGKSEGLEITFPFKKPLKSGSDGIRIFTTRPDTIFGVTYMVVAPEHPIVSEITTPEQKQKVEEYQKVSSLKSDLDRMELTKEKTGVFTGSFVLNPANPSKEIPIWISDYVLYGYGTGAIMAVPAHDQRDYEFAKTFGLEILPVIEGEITDVAFDSKTSICIHSSSSEISIDGLDYSSASSKIISWAESKRIGKKKTQFKLRDWLFARQRYWGEPIPLVHYPSGITKPIPESELPLELPPNLEEFKPSGTGESPLALAKEWLQYKDPETGEIGTRETNTMPQWAGSCWYYLRYIDPKNGKLFCDPDLEKKWMPVDLYVGGAEHAVLHLLYSRFWHKFLYDIGVVSTQEPFAKLIHQGLILGEDKRKMSKSLGNVINPDDVIRKYGADSLRLFEMFMGPLEMVKPWSTRGVEGVFRFLNRVWRLFHTGEGESFRLDEIEPTTEELKILHKTIQKVGEDIPNFSFNTAISQLMIFVNEFTPSDRRPKEVLETFILLLAPFAPHIAEELWKRSGNNKSLSTEKFPEADPQYLVESEILIVVQVNGKLRDEFKAPKDVSEADAISIAKNLDKIKGILDGKTIRKEIYVPGKLINLVIG</sequence>
<keyword id="KW-0030">Aminoacyl-tRNA synthetase</keyword>
<keyword id="KW-0067">ATP-binding</keyword>
<keyword id="KW-0963">Cytoplasm</keyword>
<keyword id="KW-0436">Ligase</keyword>
<keyword id="KW-0547">Nucleotide-binding</keyword>
<keyword id="KW-0648">Protein biosynthesis</keyword>
<evidence type="ECO:0000255" key="1">
    <source>
        <dbReference type="HAMAP-Rule" id="MF_00049"/>
    </source>
</evidence>
<reference key="1">
    <citation type="journal article" date="2006" name="Proc. Natl. Acad. Sci. U.S.A.">
        <title>Genome reduction in Leptospira borgpetersenii reflects limited transmission potential.</title>
        <authorList>
            <person name="Bulach D.M."/>
            <person name="Zuerner R.L."/>
            <person name="Wilson P."/>
            <person name="Seemann T."/>
            <person name="McGrath A."/>
            <person name="Cullen P.A."/>
            <person name="Davis J."/>
            <person name="Johnson M."/>
            <person name="Kuczek E."/>
            <person name="Alt D.P."/>
            <person name="Peterson-Burch B."/>
            <person name="Coppel R.L."/>
            <person name="Rood J.I."/>
            <person name="Davies J.K."/>
            <person name="Adler B."/>
        </authorList>
    </citation>
    <scope>NUCLEOTIDE SEQUENCE [LARGE SCALE GENOMIC DNA]</scope>
    <source>
        <strain>JB197</strain>
    </source>
</reference>
<gene>
    <name evidence="1" type="primary">leuS</name>
    <name type="ordered locus">LBJ_2541</name>
</gene>
<comment type="catalytic activity">
    <reaction evidence="1">
        <text>tRNA(Leu) + L-leucine + ATP = L-leucyl-tRNA(Leu) + AMP + diphosphate</text>
        <dbReference type="Rhea" id="RHEA:11688"/>
        <dbReference type="Rhea" id="RHEA-COMP:9613"/>
        <dbReference type="Rhea" id="RHEA-COMP:9622"/>
        <dbReference type="ChEBI" id="CHEBI:30616"/>
        <dbReference type="ChEBI" id="CHEBI:33019"/>
        <dbReference type="ChEBI" id="CHEBI:57427"/>
        <dbReference type="ChEBI" id="CHEBI:78442"/>
        <dbReference type="ChEBI" id="CHEBI:78494"/>
        <dbReference type="ChEBI" id="CHEBI:456215"/>
        <dbReference type="EC" id="6.1.1.4"/>
    </reaction>
</comment>
<comment type="subcellular location">
    <subcellularLocation>
        <location evidence="1">Cytoplasm</location>
    </subcellularLocation>
</comment>
<comment type="similarity">
    <text evidence="1">Belongs to the class-I aminoacyl-tRNA synthetase family.</text>
</comment>
<accession>Q04Q48</accession>
<protein>
    <recommendedName>
        <fullName evidence="1">Leucine--tRNA ligase</fullName>
        <ecNumber evidence="1">6.1.1.4</ecNumber>
    </recommendedName>
    <alternativeName>
        <fullName evidence="1">Leucyl-tRNA synthetase</fullName>
        <shortName evidence="1">LeuRS</shortName>
    </alternativeName>
</protein>
<feature type="chain" id="PRO_1000009364" description="Leucine--tRNA ligase">
    <location>
        <begin position="1"/>
        <end position="864"/>
    </location>
</feature>
<feature type="short sequence motif" description="'HIGH' region">
    <location>
        <begin position="40"/>
        <end position="51"/>
    </location>
</feature>
<feature type="short sequence motif" description="'KMSKS' region">
    <location>
        <begin position="636"/>
        <end position="640"/>
    </location>
</feature>
<feature type="binding site" evidence="1">
    <location>
        <position position="639"/>
    </location>
    <ligand>
        <name>ATP</name>
        <dbReference type="ChEBI" id="CHEBI:30616"/>
    </ligand>
</feature>
<name>SYL_LEPBJ</name>